<proteinExistence type="inferred from homology"/>
<organism>
    <name type="scientific">Streptomyces coelicolor (strain ATCC BAA-471 / A3(2) / M145)</name>
    <dbReference type="NCBI Taxonomy" id="100226"/>
    <lineage>
        <taxon>Bacteria</taxon>
        <taxon>Bacillati</taxon>
        <taxon>Actinomycetota</taxon>
        <taxon>Actinomycetes</taxon>
        <taxon>Kitasatosporales</taxon>
        <taxon>Streptomycetaceae</taxon>
        <taxon>Streptomyces</taxon>
        <taxon>Streptomyces albidoflavus group</taxon>
    </lineage>
</organism>
<comment type="function">
    <text evidence="1">Cell division protein that is part of the divisome complex and is recruited early to the Z-ring. Probably stimulates Z-ring formation, perhaps through the cross-linking of FtsZ protofilaments. Its function overlaps with FtsA.</text>
</comment>
<comment type="subunit">
    <text evidence="1">Homodimer. Interacts with FtsZ.</text>
</comment>
<comment type="subcellular location">
    <subcellularLocation>
        <location evidence="1">Cytoplasm</location>
    </subcellularLocation>
    <text evidence="1">Localizes to the division site, in a FtsZ-dependent manner.</text>
</comment>
<comment type="similarity">
    <text evidence="1">Belongs to the SepF family.</text>
</comment>
<gene>
    <name evidence="1" type="primary">sepF3</name>
    <name type="ordered locus">SCO5967</name>
    <name type="ORF">SCBAC16H6.02</name>
</gene>
<dbReference type="EMBL" id="AL939125">
    <property type="protein sequence ID" value="CAC44581.1"/>
    <property type="molecule type" value="Genomic_DNA"/>
</dbReference>
<dbReference type="RefSeq" id="NP_630083.1">
    <property type="nucleotide sequence ID" value="NC_003888.3"/>
</dbReference>
<dbReference type="SMR" id="Q93JG0"/>
<dbReference type="STRING" id="100226.gene:17763627"/>
<dbReference type="PaxDb" id="100226-SCO5967"/>
<dbReference type="KEGG" id="sco:SCO5967"/>
<dbReference type="PATRIC" id="fig|100226.15.peg.6065"/>
<dbReference type="eggNOG" id="COG1799">
    <property type="taxonomic scope" value="Bacteria"/>
</dbReference>
<dbReference type="HOGENOM" id="CLU_1926362_0_0_11"/>
<dbReference type="InParanoid" id="Q93JG0"/>
<dbReference type="OrthoDB" id="4284546at2"/>
<dbReference type="PhylomeDB" id="Q93JG0"/>
<dbReference type="Proteomes" id="UP000001973">
    <property type="component" value="Chromosome"/>
</dbReference>
<dbReference type="GO" id="GO:0005737">
    <property type="term" value="C:cytoplasm"/>
    <property type="evidence" value="ECO:0007669"/>
    <property type="project" value="UniProtKB-SubCell"/>
</dbReference>
<dbReference type="GO" id="GO:0000917">
    <property type="term" value="P:division septum assembly"/>
    <property type="evidence" value="ECO:0007669"/>
    <property type="project" value="UniProtKB-KW"/>
</dbReference>
<dbReference type="GO" id="GO:0043093">
    <property type="term" value="P:FtsZ-dependent cytokinesis"/>
    <property type="evidence" value="ECO:0007669"/>
    <property type="project" value="UniProtKB-UniRule"/>
</dbReference>
<dbReference type="Gene3D" id="3.30.110.150">
    <property type="entry name" value="SepF-like protein"/>
    <property type="match status" value="1"/>
</dbReference>
<dbReference type="HAMAP" id="MF_01197">
    <property type="entry name" value="SepF"/>
    <property type="match status" value="1"/>
</dbReference>
<dbReference type="InterPro" id="IPR023052">
    <property type="entry name" value="Cell_div_SepF"/>
</dbReference>
<dbReference type="InterPro" id="IPR007561">
    <property type="entry name" value="Cell_div_SepF/SepF-rel"/>
</dbReference>
<dbReference type="InterPro" id="IPR038594">
    <property type="entry name" value="SepF-like_sf"/>
</dbReference>
<dbReference type="PANTHER" id="PTHR35798">
    <property type="entry name" value="CELL DIVISION PROTEIN SEPF"/>
    <property type="match status" value="1"/>
</dbReference>
<dbReference type="PANTHER" id="PTHR35798:SF1">
    <property type="entry name" value="CELL DIVISION PROTEIN SEPF"/>
    <property type="match status" value="1"/>
</dbReference>
<dbReference type="Pfam" id="PF04472">
    <property type="entry name" value="SepF"/>
    <property type="match status" value="1"/>
</dbReference>
<accession>Q93JG0</accession>
<feature type="chain" id="PRO_0000334120" description="Cell division protein SepF 3">
    <location>
        <begin position="1"/>
        <end position="136"/>
    </location>
</feature>
<reference key="1">
    <citation type="journal article" date="2002" name="Nature">
        <title>Complete genome sequence of the model actinomycete Streptomyces coelicolor A3(2).</title>
        <authorList>
            <person name="Bentley S.D."/>
            <person name="Chater K.F."/>
            <person name="Cerdeno-Tarraga A.-M."/>
            <person name="Challis G.L."/>
            <person name="Thomson N.R."/>
            <person name="James K.D."/>
            <person name="Harris D.E."/>
            <person name="Quail M.A."/>
            <person name="Kieser H."/>
            <person name="Harper D."/>
            <person name="Bateman A."/>
            <person name="Brown S."/>
            <person name="Chandra G."/>
            <person name="Chen C.W."/>
            <person name="Collins M."/>
            <person name="Cronin A."/>
            <person name="Fraser A."/>
            <person name="Goble A."/>
            <person name="Hidalgo J."/>
            <person name="Hornsby T."/>
            <person name="Howarth S."/>
            <person name="Huang C.-H."/>
            <person name="Kieser T."/>
            <person name="Larke L."/>
            <person name="Murphy L.D."/>
            <person name="Oliver K."/>
            <person name="O'Neil S."/>
            <person name="Rabbinowitsch E."/>
            <person name="Rajandream M.A."/>
            <person name="Rutherford K.M."/>
            <person name="Rutter S."/>
            <person name="Seeger K."/>
            <person name="Saunders D."/>
            <person name="Sharp S."/>
            <person name="Squares R."/>
            <person name="Squares S."/>
            <person name="Taylor K."/>
            <person name="Warren T."/>
            <person name="Wietzorrek A."/>
            <person name="Woodward J.R."/>
            <person name="Barrell B.G."/>
            <person name="Parkhill J."/>
            <person name="Hopwood D.A."/>
        </authorList>
    </citation>
    <scope>NUCLEOTIDE SEQUENCE [LARGE SCALE GENOMIC DNA]</scope>
    <source>
        <strain>ATCC BAA-471 / A3(2) / M145</strain>
    </source>
</reference>
<keyword id="KW-0131">Cell cycle</keyword>
<keyword id="KW-0132">Cell division</keyword>
<keyword id="KW-0963">Cytoplasm</keyword>
<keyword id="KW-1185">Reference proteome</keyword>
<keyword id="KW-0717">Septation</keyword>
<evidence type="ECO:0000255" key="1">
    <source>
        <dbReference type="HAMAP-Rule" id="MF_01197"/>
    </source>
</evidence>
<protein>
    <recommendedName>
        <fullName evidence="1">Cell division protein SepF 3</fullName>
    </recommendedName>
</protein>
<sequence>MKSGEPVNSHDVTDEQWEGLAQVVPLRGRDAWPSAVGHRAMPEAETERRRRFVVLRINVFADAREVAETLMAGIPVLLDLTSAEGEVAKRVLDFSTGVVFGLASGMHRVDRNVFLLTPAGTEVNGLMESAAGVPGV</sequence>
<name>SEPF3_STRCO</name>